<proteinExistence type="inferred from homology"/>
<keyword id="KW-0090">Biological rhythms</keyword>
<comment type="function">
    <text evidence="1">Key component of the KaiABC oscillator complex, which constitutes the main circadian regulator in cyanobacteria. Complex composition changes during the circadian cycle to control KaiC phosphorylation. KaiA stimulates KaiC autophosphorylation, while KaiB sequesters KaiA, leading to KaiC autodephosphorylation. Phospho-Ser-431 KaiC accumulation triggers binding of KaiB to form the KaiB(6):KaiC(6) complex, leading to changes in output regulators CikA and SasA. KaiB switches to a thioredoxin-like fold (KaiB(fs)) when bound to KaiC. KaiB(6):KaiC(6) formation exposes a site for KaiA binding that sequesters KaiA from KaiC, making the KaiC(6):KaiB(6):KaiA(12) complex that results in KaiC autodephosphorylation.</text>
</comment>
<comment type="function">
    <text evidence="1">A metamorphic protein which reversibly switches between an inactive tetrameric fold and a rare, thioredoxin-like monomeric fold (KaiB(fs)). KaiB(fs) binds phospho-KaiC, KaiA and CikA. KaiA and CikA compete for binding to KaiB(fs), and KaiB(fs) and SasA compete for binding to KaiC, thus the clock oscillator and output signal pathway are tightly coupled.</text>
</comment>
<comment type="subunit">
    <text evidence="1">The KaiABC complex composition changes during the circadian cycle to control KaiC phosphorylation. Complexes KaiC(6), KaiA(2-4):KaiC(6), KaiB(6):KaiC(6) and KaiC(6):KaiB(6):KaiA(12) are among the most important forms, many form cooperatively. Undergoes a major conformational rearrangment; in the free state forms homotetramers as a dimer of dimers. When bound to the CI domain of KaiC switches to a monomeric thioredoxin-fold (KaiB(fs)). KaiB(fs) binds CikA, leading it to dephosphorylate phospho-RpaA.</text>
</comment>
<comment type="domain">
    <text evidence="1">Has 2 forms, fold switches to a thioredoxin-like fold (KaiB(fs)) when bound to KaiC.</text>
</comment>
<comment type="similarity">
    <text evidence="1">Belongs to the KaiB family.</text>
</comment>
<organism>
    <name type="scientific">Synechococcus sp. (strain ATCC 27144 / PCC 6301 / SAUG 1402/1)</name>
    <name type="common">Anacystis nidulans</name>
    <dbReference type="NCBI Taxonomy" id="269084"/>
    <lineage>
        <taxon>Bacteria</taxon>
        <taxon>Bacillati</taxon>
        <taxon>Cyanobacteriota</taxon>
        <taxon>Cyanophyceae</taxon>
        <taxon>Synechococcales</taxon>
        <taxon>Synechococcaceae</taxon>
        <taxon>Synechococcus</taxon>
    </lineage>
</organism>
<gene>
    <name evidence="1" type="primary">kaiB</name>
    <name type="ordered locus">syc0333_d</name>
</gene>
<dbReference type="EMBL" id="AP008231">
    <property type="protein sequence ID" value="BAD78523.1"/>
    <property type="molecule type" value="Genomic_DNA"/>
</dbReference>
<dbReference type="RefSeq" id="WP_011242647.1">
    <property type="nucleotide sequence ID" value="NZ_CP085785.1"/>
</dbReference>
<dbReference type="SASBDB" id="Q5N595"/>
<dbReference type="SMR" id="Q5N595"/>
<dbReference type="GeneID" id="72430076"/>
<dbReference type="KEGG" id="syc:syc0333_d"/>
<dbReference type="eggNOG" id="COG4251">
    <property type="taxonomic scope" value="Bacteria"/>
</dbReference>
<dbReference type="Proteomes" id="UP000001175">
    <property type="component" value="Chromosome"/>
</dbReference>
<dbReference type="GO" id="GO:0007623">
    <property type="term" value="P:circadian rhythm"/>
    <property type="evidence" value="ECO:0007669"/>
    <property type="project" value="UniProtKB-UniRule"/>
</dbReference>
<dbReference type="CDD" id="cd02978">
    <property type="entry name" value="KaiB_like"/>
    <property type="match status" value="1"/>
</dbReference>
<dbReference type="FunFam" id="3.40.30.10:FF:000180">
    <property type="entry name" value="Circadian clock protein KaiB"/>
    <property type="match status" value="1"/>
</dbReference>
<dbReference type="Gene3D" id="3.40.30.10">
    <property type="entry name" value="Glutaredoxin"/>
    <property type="match status" value="1"/>
</dbReference>
<dbReference type="HAMAP" id="MF_01835">
    <property type="entry name" value="KaiB"/>
    <property type="match status" value="1"/>
</dbReference>
<dbReference type="InterPro" id="IPR013474">
    <property type="entry name" value="Circ_KaiB"/>
</dbReference>
<dbReference type="InterPro" id="IPR039022">
    <property type="entry name" value="KaiB-like"/>
</dbReference>
<dbReference type="InterPro" id="IPR011649">
    <property type="entry name" value="KaiB_domain"/>
</dbReference>
<dbReference type="InterPro" id="IPR036249">
    <property type="entry name" value="Thioredoxin-like_sf"/>
</dbReference>
<dbReference type="NCBIfam" id="TIGR02654">
    <property type="entry name" value="circ_KaiB"/>
    <property type="match status" value="1"/>
</dbReference>
<dbReference type="NCBIfam" id="NF006798">
    <property type="entry name" value="PRK09301.1"/>
    <property type="match status" value="1"/>
</dbReference>
<dbReference type="PANTHER" id="PTHR41709:SF2">
    <property type="entry name" value="CIRCADIAN CLOCK PROTEIN KAIB2"/>
    <property type="match status" value="1"/>
</dbReference>
<dbReference type="PANTHER" id="PTHR41709">
    <property type="entry name" value="KAIB-LIKE PROTEIN 1"/>
    <property type="match status" value="1"/>
</dbReference>
<dbReference type="Pfam" id="PF07689">
    <property type="entry name" value="KaiB"/>
    <property type="match status" value="1"/>
</dbReference>
<dbReference type="SMART" id="SM01248">
    <property type="entry name" value="KaiB"/>
    <property type="match status" value="1"/>
</dbReference>
<dbReference type="SUPFAM" id="SSF52833">
    <property type="entry name" value="Thioredoxin-like"/>
    <property type="match status" value="1"/>
</dbReference>
<feature type="chain" id="PRO_1000070461" description="Circadian clock oscillator protein KaiB">
    <location>
        <begin position="1"/>
        <end position="102"/>
    </location>
</feature>
<accession>Q5N595</accession>
<evidence type="ECO:0000255" key="1">
    <source>
        <dbReference type="HAMAP-Rule" id="MF_01835"/>
    </source>
</evidence>
<reference key="1">
    <citation type="journal article" date="2007" name="Photosyn. Res.">
        <title>Complete nucleotide sequence of the freshwater unicellular cyanobacterium Synechococcus elongatus PCC 6301 chromosome: gene content and organization.</title>
        <authorList>
            <person name="Sugita C."/>
            <person name="Ogata K."/>
            <person name="Shikata M."/>
            <person name="Jikuya H."/>
            <person name="Takano J."/>
            <person name="Furumichi M."/>
            <person name="Kanehisa M."/>
            <person name="Omata T."/>
            <person name="Sugiura M."/>
            <person name="Sugita M."/>
        </authorList>
    </citation>
    <scope>NUCLEOTIDE SEQUENCE [LARGE SCALE GENOMIC DNA]</scope>
    <source>
        <strain>ATCC 27144 / PCC 6301 / SAUG 1402/1</strain>
    </source>
</reference>
<sequence>MSPRKTYILKLYVAGNTPNSVRALKTLKNILEVEFQGVYALKVIDVLKNPQLAEEDKILATPTLAKVLPLPVRRIIGDLSDREKVLIGLDLLYGELQDSDDF</sequence>
<protein>
    <recommendedName>
        <fullName evidence="1">Circadian clock oscillator protein KaiB</fullName>
    </recommendedName>
</protein>
<name>KAIB_SYNP6</name>